<keyword id="KW-0067">ATP-binding</keyword>
<keyword id="KW-0143">Chaperone</keyword>
<keyword id="KW-0963">Cytoplasm</keyword>
<keyword id="KW-0413">Isomerase</keyword>
<keyword id="KW-0547">Nucleotide-binding</keyword>
<protein>
    <recommendedName>
        <fullName evidence="1">Chaperonin GroEL</fullName>
        <ecNumber evidence="1">5.6.1.7</ecNumber>
    </recommendedName>
    <alternativeName>
        <fullName evidence="1">60 kDa chaperonin</fullName>
    </alternativeName>
    <alternativeName>
        <fullName evidence="1">Chaperonin-60</fullName>
        <shortName evidence="1">Cpn60</shortName>
    </alternativeName>
</protein>
<comment type="function">
    <text evidence="1">Together with its co-chaperonin GroES, plays an essential role in assisting protein folding. The GroEL-GroES system forms a nano-cage that allows encapsulation of the non-native substrate proteins and provides a physical environment optimized to promote and accelerate protein folding.</text>
</comment>
<comment type="catalytic activity">
    <reaction evidence="1">
        <text>ATP + H2O + a folded polypeptide = ADP + phosphate + an unfolded polypeptide.</text>
        <dbReference type="EC" id="5.6.1.7"/>
    </reaction>
</comment>
<comment type="subunit">
    <text evidence="1">Forms a cylinder of 14 subunits composed of two heptameric rings stacked back-to-back. Interacts with the co-chaperonin GroES.</text>
</comment>
<comment type="subcellular location">
    <subcellularLocation>
        <location evidence="1">Cytoplasm</location>
    </subcellularLocation>
</comment>
<comment type="similarity">
    <text evidence="1">Belongs to the chaperonin (HSP60) family.</text>
</comment>
<accession>Q8KJ16</accession>
<gene>
    <name evidence="1" type="primary">groEL</name>
    <name evidence="1" type="synonym">groL</name>
</gene>
<evidence type="ECO:0000255" key="1">
    <source>
        <dbReference type="HAMAP-Rule" id="MF_00600"/>
    </source>
</evidence>
<reference key="1">
    <citation type="journal article" date="2002" name="J. Clin. Microbiol.">
        <title>groESL sequence determination, phylogenetic analysis, and species differentiation for viridans group streptococci.</title>
        <authorList>
            <person name="Teng L.-J."/>
            <person name="Hsueh P.R."/>
            <person name="Tsai J.C."/>
            <person name="Chen P.-W."/>
            <person name="Hsu J.-C."/>
            <person name="Lai H.C."/>
            <person name="Lee C.N."/>
            <person name="Ho S.W."/>
        </authorList>
    </citation>
    <scope>NUCLEOTIDE SEQUENCE [GENOMIC DNA]</scope>
    <source>
        <strain>ATCC 10556 / DSM 20567 / JCM 5708 / LMG 14702 / NCIMB 702064 / NCTC 7863</strain>
    </source>
</reference>
<sequence length="540" mass="56909">MAKDIKFSADARSSMVRGVDILANTVKVTLGPKGRNVVLEKSFGSPLITNDGVTIAKEIELEDHFENMGAKLVSEVASKTNDIAGDGTTTATVLTQAIVREGIKNVTAGANPIGIRRGIEAAVATAVEALKSNSVPVSNKEAIAQVAAVSSRSEKVGEYISEAMEKVGNDGVITIEESKGMETELDVVEGMQFDRGYLSQYMVTDNEKMVAELDNPYILITDKKISNIQEILPLLENILKTNRPLLIVADDVDGEALPTLVLNKIRGTFNVVAVKAPGFGDRRKAMLEDIAILTGGTVITDDLGLELKDATIEALGQASKVTVDKDSTVIVEGSGNPEAIANRVAVIKSQIESSTSEFDREKLQERLAKLSGGVAVIKVGAATETELKEMKLRIEDALNATRAAVEEGIVSGGGTAYINVLDAVAGLELAGDEGTGRNIVLRALEEPVRQIALNAGFEGSIVIDRLKNSEVGTGFNAATGEWVNMIEAGIIDPVKVTRSALQNAASVASLILTTEAVVANQPEPASPAPAMDPGMMGGMM</sequence>
<proteinExistence type="inferred from homology"/>
<feature type="chain" id="PRO_0000063562" description="Chaperonin GroEL">
    <location>
        <begin position="1"/>
        <end position="540"/>
    </location>
</feature>
<feature type="binding site" evidence="1">
    <location>
        <begin position="29"/>
        <end position="32"/>
    </location>
    <ligand>
        <name>ATP</name>
        <dbReference type="ChEBI" id="CHEBI:30616"/>
    </ligand>
</feature>
<feature type="binding site" evidence="1">
    <location>
        <begin position="86"/>
        <end position="90"/>
    </location>
    <ligand>
        <name>ATP</name>
        <dbReference type="ChEBI" id="CHEBI:30616"/>
    </ligand>
</feature>
<feature type="binding site" evidence="1">
    <location>
        <position position="413"/>
    </location>
    <ligand>
        <name>ATP</name>
        <dbReference type="ChEBI" id="CHEBI:30616"/>
    </ligand>
</feature>
<feature type="binding site" evidence="1">
    <location>
        <begin position="476"/>
        <end position="478"/>
    </location>
    <ligand>
        <name>ATP</name>
        <dbReference type="ChEBI" id="CHEBI:30616"/>
    </ligand>
</feature>
<feature type="binding site" evidence="1">
    <location>
        <position position="492"/>
    </location>
    <ligand>
        <name>ATP</name>
        <dbReference type="ChEBI" id="CHEBI:30616"/>
    </ligand>
</feature>
<organism>
    <name type="scientific">Streptococcus sanguinis</name>
    <dbReference type="NCBI Taxonomy" id="1305"/>
    <lineage>
        <taxon>Bacteria</taxon>
        <taxon>Bacillati</taxon>
        <taxon>Bacillota</taxon>
        <taxon>Bacilli</taxon>
        <taxon>Lactobacillales</taxon>
        <taxon>Streptococcaceae</taxon>
        <taxon>Streptococcus</taxon>
    </lineage>
</organism>
<name>CH60_STRSA</name>
<dbReference type="EC" id="5.6.1.7" evidence="1"/>
<dbReference type="EMBL" id="AF378197">
    <property type="protein sequence ID" value="AAM46148.1"/>
    <property type="molecule type" value="Genomic_DNA"/>
</dbReference>
<dbReference type="RefSeq" id="WP_002914472.1">
    <property type="nucleotide sequence ID" value="NZ_RJND01000009.1"/>
</dbReference>
<dbReference type="SMR" id="Q8KJ16"/>
<dbReference type="GeneID" id="48426478"/>
<dbReference type="OMA" id="TDTDKME"/>
<dbReference type="GO" id="GO:0005737">
    <property type="term" value="C:cytoplasm"/>
    <property type="evidence" value="ECO:0007669"/>
    <property type="project" value="UniProtKB-SubCell"/>
</dbReference>
<dbReference type="GO" id="GO:0005524">
    <property type="term" value="F:ATP binding"/>
    <property type="evidence" value="ECO:0007669"/>
    <property type="project" value="UniProtKB-UniRule"/>
</dbReference>
<dbReference type="GO" id="GO:0140662">
    <property type="term" value="F:ATP-dependent protein folding chaperone"/>
    <property type="evidence" value="ECO:0007669"/>
    <property type="project" value="InterPro"/>
</dbReference>
<dbReference type="GO" id="GO:0016853">
    <property type="term" value="F:isomerase activity"/>
    <property type="evidence" value="ECO:0007669"/>
    <property type="project" value="UniProtKB-KW"/>
</dbReference>
<dbReference type="GO" id="GO:0051082">
    <property type="term" value="F:unfolded protein binding"/>
    <property type="evidence" value="ECO:0007669"/>
    <property type="project" value="UniProtKB-UniRule"/>
</dbReference>
<dbReference type="GO" id="GO:0042026">
    <property type="term" value="P:protein refolding"/>
    <property type="evidence" value="ECO:0007669"/>
    <property type="project" value="UniProtKB-UniRule"/>
</dbReference>
<dbReference type="CDD" id="cd03344">
    <property type="entry name" value="GroEL"/>
    <property type="match status" value="1"/>
</dbReference>
<dbReference type="FunFam" id="1.10.560.10:FF:000001">
    <property type="entry name" value="60 kDa chaperonin"/>
    <property type="match status" value="1"/>
</dbReference>
<dbReference type="FunFam" id="3.50.7.10:FF:000001">
    <property type="entry name" value="60 kDa chaperonin"/>
    <property type="match status" value="1"/>
</dbReference>
<dbReference type="Gene3D" id="3.50.7.10">
    <property type="entry name" value="GroEL"/>
    <property type="match status" value="1"/>
</dbReference>
<dbReference type="Gene3D" id="1.10.560.10">
    <property type="entry name" value="GroEL-like equatorial domain"/>
    <property type="match status" value="1"/>
</dbReference>
<dbReference type="Gene3D" id="3.30.260.10">
    <property type="entry name" value="TCP-1-like chaperonin intermediate domain"/>
    <property type="match status" value="1"/>
</dbReference>
<dbReference type="HAMAP" id="MF_00600">
    <property type="entry name" value="CH60"/>
    <property type="match status" value="1"/>
</dbReference>
<dbReference type="InterPro" id="IPR018370">
    <property type="entry name" value="Chaperonin_Cpn60_CS"/>
</dbReference>
<dbReference type="InterPro" id="IPR001844">
    <property type="entry name" value="Cpn60/GroEL"/>
</dbReference>
<dbReference type="InterPro" id="IPR002423">
    <property type="entry name" value="Cpn60/GroEL/TCP-1"/>
</dbReference>
<dbReference type="InterPro" id="IPR027409">
    <property type="entry name" value="GroEL-like_apical_dom_sf"/>
</dbReference>
<dbReference type="InterPro" id="IPR027413">
    <property type="entry name" value="GROEL-like_equatorial_sf"/>
</dbReference>
<dbReference type="InterPro" id="IPR027410">
    <property type="entry name" value="TCP-1-like_intermed_sf"/>
</dbReference>
<dbReference type="NCBIfam" id="TIGR02348">
    <property type="entry name" value="GroEL"/>
    <property type="match status" value="1"/>
</dbReference>
<dbReference type="NCBIfam" id="NF000592">
    <property type="entry name" value="PRK00013.1"/>
    <property type="match status" value="1"/>
</dbReference>
<dbReference type="NCBIfam" id="NF009487">
    <property type="entry name" value="PRK12849.1"/>
    <property type="match status" value="1"/>
</dbReference>
<dbReference type="NCBIfam" id="NF009488">
    <property type="entry name" value="PRK12850.1"/>
    <property type="match status" value="1"/>
</dbReference>
<dbReference type="NCBIfam" id="NF009489">
    <property type="entry name" value="PRK12851.1"/>
    <property type="match status" value="1"/>
</dbReference>
<dbReference type="PANTHER" id="PTHR45633">
    <property type="entry name" value="60 KDA HEAT SHOCK PROTEIN, MITOCHONDRIAL"/>
    <property type="match status" value="1"/>
</dbReference>
<dbReference type="Pfam" id="PF00118">
    <property type="entry name" value="Cpn60_TCP1"/>
    <property type="match status" value="1"/>
</dbReference>
<dbReference type="PRINTS" id="PR00298">
    <property type="entry name" value="CHAPERONIN60"/>
</dbReference>
<dbReference type="SUPFAM" id="SSF52029">
    <property type="entry name" value="GroEL apical domain-like"/>
    <property type="match status" value="1"/>
</dbReference>
<dbReference type="SUPFAM" id="SSF48592">
    <property type="entry name" value="GroEL equatorial domain-like"/>
    <property type="match status" value="1"/>
</dbReference>
<dbReference type="SUPFAM" id="SSF54849">
    <property type="entry name" value="GroEL-intermediate domain like"/>
    <property type="match status" value="1"/>
</dbReference>
<dbReference type="PROSITE" id="PS00296">
    <property type="entry name" value="CHAPERONINS_CPN60"/>
    <property type="match status" value="1"/>
</dbReference>